<evidence type="ECO:0000250" key="1"/>
<evidence type="ECO:0000255" key="2"/>
<evidence type="ECO:0000255" key="3">
    <source>
        <dbReference type="PROSITE-ProRule" id="PRU01118"/>
    </source>
</evidence>
<evidence type="ECO:0000256" key="4">
    <source>
        <dbReference type="SAM" id="MobiDB-lite"/>
    </source>
</evidence>
<evidence type="ECO:0000305" key="5"/>
<comment type="function">
    <text>Hydrolyzes the cell wall of L.lactis and M.lysodeikticus. Required for cell separation during growth.</text>
</comment>
<comment type="catalytic activity">
    <reaction>
        <text>Hydrolysis of (1-&gt;4)-beta-linkages between N-acetylmuramic acid and N-acetyl-D-glucosamine residues in a peptidoglycan and between N-acetyl-D-glucosamine residues in chitodextrins.</text>
        <dbReference type="EC" id="3.2.1.17"/>
    </reaction>
</comment>
<comment type="subcellular location">
    <subcellularLocation>
        <location evidence="1">Secreted</location>
    </subcellularLocation>
</comment>
<comment type="domain">
    <text>The LysM domains are thought to be involved in peptidoglycan binding.</text>
</comment>
<comment type="similarity">
    <text evidence="5">Belongs to the glycosyl hydrolase 73 family.</text>
</comment>
<name>ACMA_LACLM</name>
<organism>
    <name type="scientific">Lactococcus lactis subsp. cremoris (strain MG1363)</name>
    <dbReference type="NCBI Taxonomy" id="416870"/>
    <lineage>
        <taxon>Bacteria</taxon>
        <taxon>Bacillati</taxon>
        <taxon>Bacillota</taxon>
        <taxon>Bacilli</taxon>
        <taxon>Lactobacillales</taxon>
        <taxon>Streptococcaceae</taxon>
        <taxon>Lactococcus</taxon>
        <taxon>Lactococcus cremoris subsp. cremoris</taxon>
    </lineage>
</organism>
<dbReference type="EC" id="3.2.1.17"/>
<dbReference type="EMBL" id="U17696">
    <property type="protein sequence ID" value="AAC33367.1"/>
    <property type="molecule type" value="Genomic_DNA"/>
</dbReference>
<dbReference type="EMBL" id="AM406671">
    <property type="protein sequence ID" value="CAL96887.1"/>
    <property type="molecule type" value="Genomic_DNA"/>
</dbReference>
<dbReference type="RefSeq" id="WP_011834353.1">
    <property type="nucleotide sequence ID" value="NC_009004.1"/>
</dbReference>
<dbReference type="PDB" id="9HVW">
    <property type="method" value="EM"/>
    <property type="resolution" value="3.10 A"/>
    <property type="chains" value="D/E/F=220-320"/>
</dbReference>
<dbReference type="PDBsum" id="9HVW"/>
<dbReference type="EMDB" id="EMD-52444"/>
<dbReference type="SMR" id="A2RHZ5"/>
<dbReference type="STRING" id="416870.llmg_0280"/>
<dbReference type="CAZy" id="CBM50">
    <property type="family name" value="Carbohydrate-Binding Module Family 50"/>
</dbReference>
<dbReference type="CAZy" id="GH73">
    <property type="family name" value="Glycoside Hydrolase Family 73"/>
</dbReference>
<dbReference type="KEGG" id="llm:llmg_0280"/>
<dbReference type="eggNOG" id="COG1388">
    <property type="taxonomic scope" value="Bacteria"/>
</dbReference>
<dbReference type="eggNOG" id="COG1705">
    <property type="taxonomic scope" value="Bacteria"/>
</dbReference>
<dbReference type="HOGENOM" id="CLU_013771_6_1_9"/>
<dbReference type="OrthoDB" id="2155627at2"/>
<dbReference type="PhylomeDB" id="A2RHZ5"/>
<dbReference type="Proteomes" id="UP000000364">
    <property type="component" value="Chromosome"/>
</dbReference>
<dbReference type="GO" id="GO:0005576">
    <property type="term" value="C:extracellular region"/>
    <property type="evidence" value="ECO:0007669"/>
    <property type="project" value="UniProtKB-SubCell"/>
</dbReference>
<dbReference type="GO" id="GO:0004040">
    <property type="term" value="F:amidase activity"/>
    <property type="evidence" value="ECO:0007669"/>
    <property type="project" value="InterPro"/>
</dbReference>
<dbReference type="GO" id="GO:0003796">
    <property type="term" value="F:lysozyme activity"/>
    <property type="evidence" value="ECO:0007669"/>
    <property type="project" value="UniProtKB-EC"/>
</dbReference>
<dbReference type="GO" id="GO:0061784">
    <property type="term" value="F:peptidoglycan N-acetylglucosaminidase activity"/>
    <property type="evidence" value="ECO:0000314"/>
    <property type="project" value="CACAO"/>
</dbReference>
<dbReference type="GO" id="GO:0071555">
    <property type="term" value="P:cell wall organization"/>
    <property type="evidence" value="ECO:0007669"/>
    <property type="project" value="UniProtKB-KW"/>
</dbReference>
<dbReference type="GO" id="GO:0042742">
    <property type="term" value="P:defense response to bacterium"/>
    <property type="evidence" value="ECO:0007669"/>
    <property type="project" value="UniProtKB-KW"/>
</dbReference>
<dbReference type="GO" id="GO:0000917">
    <property type="term" value="P:division septum assembly"/>
    <property type="evidence" value="ECO:0007669"/>
    <property type="project" value="UniProtKB-KW"/>
</dbReference>
<dbReference type="GO" id="GO:0031640">
    <property type="term" value="P:killing of cells of another organism"/>
    <property type="evidence" value="ECO:0007669"/>
    <property type="project" value="UniProtKB-KW"/>
</dbReference>
<dbReference type="CDD" id="cd00118">
    <property type="entry name" value="LysM"/>
    <property type="match status" value="3"/>
</dbReference>
<dbReference type="Gene3D" id="1.10.530.10">
    <property type="match status" value="1"/>
</dbReference>
<dbReference type="Gene3D" id="4.10.80.30">
    <property type="entry name" value="DNA polymerase, domain 6"/>
    <property type="match status" value="1"/>
</dbReference>
<dbReference type="Gene3D" id="3.10.350.10">
    <property type="entry name" value="LysM domain"/>
    <property type="match status" value="3"/>
</dbReference>
<dbReference type="InterPro" id="IPR051056">
    <property type="entry name" value="Glycosyl_Hydrolase_73"/>
</dbReference>
<dbReference type="InterPro" id="IPR018392">
    <property type="entry name" value="LysM_dom"/>
</dbReference>
<dbReference type="InterPro" id="IPR036779">
    <property type="entry name" value="LysM_dom_sf"/>
</dbReference>
<dbReference type="InterPro" id="IPR002901">
    <property type="entry name" value="MGlyc_endo_b_GlcNAc-like_dom"/>
</dbReference>
<dbReference type="PANTHER" id="PTHR33308">
    <property type="entry name" value="PEPTIDOGLYCAN HYDROLASE FLGJ"/>
    <property type="match status" value="1"/>
</dbReference>
<dbReference type="PANTHER" id="PTHR33308:SF9">
    <property type="entry name" value="PEPTIDOGLYCAN HYDROLASE FLGJ"/>
    <property type="match status" value="1"/>
</dbReference>
<dbReference type="Pfam" id="PF01832">
    <property type="entry name" value="Glucosaminidase"/>
    <property type="match status" value="1"/>
</dbReference>
<dbReference type="Pfam" id="PF01476">
    <property type="entry name" value="LysM"/>
    <property type="match status" value="3"/>
</dbReference>
<dbReference type="PRINTS" id="PR01002">
    <property type="entry name" value="FLGFLGJ"/>
</dbReference>
<dbReference type="SMART" id="SM00257">
    <property type="entry name" value="LysM"/>
    <property type="match status" value="3"/>
</dbReference>
<dbReference type="SMART" id="SM00047">
    <property type="entry name" value="LYZ2"/>
    <property type="match status" value="1"/>
</dbReference>
<dbReference type="SUPFAM" id="SSF54106">
    <property type="entry name" value="LysM domain"/>
    <property type="match status" value="3"/>
</dbReference>
<dbReference type="PROSITE" id="PS51782">
    <property type="entry name" value="LYSM"/>
    <property type="match status" value="3"/>
</dbReference>
<accession>A2RHZ5</accession>
<accession>O52362</accession>
<accession>Q48603</accession>
<proteinExistence type="evidence at protein level"/>
<sequence length="437" mass="46564">MPVSRVKVKNRHLKKKTKKPLAFYKPATKFAGAVLIAGTLTTTHELLLQQTSPMVQAATNSSEVFIESIAASAKPVADANGLYPSVMIAQAILESNWGSSQLSRAPYYNLFGIQGTYQGKSVVFKTQEYLNGKWVTKDMPFRVYPSFNQSFQDNAYVLKTTNFGNGPYYAKAWRANAATYQDATAALTGRYATDPSYGASLNRIISQYNLTRFDGASSAGNTNSGGSTTTITNNNSGTNSSSTTYTVKSGDTLWGISQRYGISVAQIQSANNLKSTIIYIGQKLVLTGSASSTNSGGSNNSASTTPTTSVTPAKPTSQTTVKVKSGDTLWALSVKYKTSIAQLKSWNHLSSDTIYIGQNLIVSQSAAASNPSTGSGSTATNNSNSTSSNSNASIHKVVKGDTLWGLSQKSGSPIASIKAWNHLSSDTILIGQYLRIK</sequence>
<gene>
    <name type="primary">acmA</name>
    <name type="ordered locus">llmg_0280</name>
</gene>
<protein>
    <recommendedName>
        <fullName>Probable N-acetylmuramidase</fullName>
        <ecNumber>3.2.1.17</ecNumber>
    </recommendedName>
    <alternativeName>
        <fullName>Autolysin</fullName>
    </alternativeName>
    <alternativeName>
        <fullName>Lysozyme</fullName>
    </alternativeName>
    <alternativeName>
        <fullName>Peptidoglycan hydrolase</fullName>
    </alternativeName>
</protein>
<reference key="1">
    <citation type="journal article" date="1995" name="J. Bacteriol.">
        <title>Molecular cloning and nucleotide sequence of the gene encoding the major peptidoglycan hydrolase of Lactococcus lactis, a muramidase needed for cell separation.</title>
        <authorList>
            <person name="Buist G."/>
            <person name="Kok J."/>
            <person name="Leenhouts K.J."/>
            <person name="Dabrowska M."/>
            <person name="Venema G."/>
            <person name="Haandrikman A.J."/>
        </authorList>
    </citation>
    <scope>NUCLEOTIDE SEQUENCE [GENOMIC DNA]</scope>
</reference>
<reference key="2">
    <citation type="journal article" date="2007" name="J. Bacteriol.">
        <title>The complete genome sequence of the lactic acid bacterial paradigm Lactococcus lactis subsp. cremoris MG1363.</title>
        <authorList>
            <person name="Wegmann U."/>
            <person name="O'Connell-Motherway M."/>
            <person name="Zomer A."/>
            <person name="Buist G."/>
            <person name="Shearman C."/>
            <person name="Canchaya C."/>
            <person name="Ventura M."/>
            <person name="Goesmann A."/>
            <person name="Gasson M.J."/>
            <person name="Kuipers O.P."/>
            <person name="van Sinderen D."/>
            <person name="Kok J."/>
        </authorList>
    </citation>
    <scope>NUCLEOTIDE SEQUENCE [LARGE SCALE GENOMIC DNA]</scope>
    <source>
        <strain>MG1363</strain>
    </source>
</reference>
<feature type="signal peptide" evidence="2">
    <location>
        <begin position="1"/>
        <end position="57"/>
    </location>
</feature>
<feature type="chain" id="PRO_0000285234" description="Probable N-acetylmuramidase">
    <location>
        <begin position="58"/>
        <end position="437"/>
    </location>
</feature>
<feature type="domain" description="LysM 1" evidence="3">
    <location>
        <begin position="243"/>
        <end position="286"/>
    </location>
</feature>
<feature type="domain" description="LysM 2" evidence="3">
    <location>
        <begin position="319"/>
        <end position="362"/>
    </location>
</feature>
<feature type="domain" description="LysM 3" evidence="3">
    <location>
        <begin position="393"/>
        <end position="436"/>
    </location>
</feature>
<feature type="region of interest" description="Disordered" evidence="4">
    <location>
        <begin position="217"/>
        <end position="244"/>
    </location>
</feature>
<feature type="region of interest" description="Disordered" evidence="4">
    <location>
        <begin position="290"/>
        <end position="320"/>
    </location>
</feature>
<feature type="region of interest" description="Disordered" evidence="4">
    <location>
        <begin position="367"/>
        <end position="392"/>
    </location>
</feature>
<feature type="compositionally biased region" description="Low complexity" evidence="4">
    <location>
        <begin position="290"/>
        <end position="317"/>
    </location>
</feature>
<keyword id="KW-0002">3D-structure</keyword>
<keyword id="KW-0929">Antimicrobial</keyword>
<keyword id="KW-0081">Bacteriolytic enzyme</keyword>
<keyword id="KW-0131">Cell cycle</keyword>
<keyword id="KW-0132">Cell division</keyword>
<keyword id="KW-0961">Cell wall biogenesis/degradation</keyword>
<keyword id="KW-0326">Glycosidase</keyword>
<keyword id="KW-0378">Hydrolase</keyword>
<keyword id="KW-0677">Repeat</keyword>
<keyword id="KW-0964">Secreted</keyword>
<keyword id="KW-0717">Septation</keyword>
<keyword id="KW-0732">Signal</keyword>